<feature type="chain" id="PRO_0000394268" description="Magnesium transporter MRS2-B">
    <location>
        <begin position="1"/>
        <end position="436"/>
    </location>
</feature>
<feature type="transmembrane region" description="Helical" evidence="2">
    <location>
        <begin position="372"/>
        <end position="392"/>
    </location>
</feature>
<feature type="transmembrane region" description="Helical" evidence="2">
    <location>
        <begin position="408"/>
        <end position="428"/>
    </location>
</feature>
<feature type="region of interest" description="Disordered" evidence="3">
    <location>
        <begin position="1"/>
        <end position="60"/>
    </location>
</feature>
<feature type="coiled-coil region" evidence="2">
    <location>
        <begin position="176"/>
        <end position="242"/>
    </location>
</feature>
<feature type="short sequence motif" description="Required for magnesium transport activity">
    <location>
        <begin position="392"/>
        <end position="394"/>
    </location>
</feature>
<feature type="compositionally biased region" description="Low complexity" evidence="3">
    <location>
        <begin position="1"/>
        <end position="14"/>
    </location>
</feature>
<feature type="compositionally biased region" description="Low complexity" evidence="3">
    <location>
        <begin position="29"/>
        <end position="54"/>
    </location>
</feature>
<sequence>MSAAAASSAAGDSAKQPLLHHQRGNPPHVASVSSPSLPSAPPGALAGGRRFPGGLDVPNLKKRGGGTRSWIRVEAATASVQTLEVDKATMMRRCELPARDLRLLDPLFVYPSTILGRERAIVVNLEQIRCVITADEVLLLNSLDSYVLQYAAELQRRLLQRAEGDELPFEFRALELALEAACSFLDAQAAELEIEAYPLLDELTSKISTLNLERVRRLKSRLVALTRRVQKVRDEIEQLMDDDGDMAEMYLSEKKLRTEASFYGDQSMLGYNSVGDGTSFSAPVSPVSSPTESRKLEKAFSLCRSRHDSVKSSDNTATEHIQELEMLLEAYFVVIDSTLNKLTSLKEYIDDTEDFINIQLDNVRNQLIQFELLLTTATFVVAIFGVVAGIFGMNFETSVFSIQNAFQWVLIITGVIGAFIFCGFLWFFKYKRLMPL</sequence>
<organism>
    <name type="scientific">Oryza sativa subsp. indica</name>
    <name type="common">Rice</name>
    <dbReference type="NCBI Taxonomy" id="39946"/>
    <lineage>
        <taxon>Eukaryota</taxon>
        <taxon>Viridiplantae</taxon>
        <taxon>Streptophyta</taxon>
        <taxon>Embryophyta</taxon>
        <taxon>Tracheophyta</taxon>
        <taxon>Spermatophyta</taxon>
        <taxon>Magnoliopsida</taxon>
        <taxon>Liliopsida</taxon>
        <taxon>Poales</taxon>
        <taxon>Poaceae</taxon>
        <taxon>BOP clade</taxon>
        <taxon>Oryzoideae</taxon>
        <taxon>Oryzeae</taxon>
        <taxon>Oryzinae</taxon>
        <taxon>Oryza</taxon>
        <taxon>Oryza sativa</taxon>
    </lineage>
</organism>
<proteinExistence type="inferred from homology"/>
<comment type="function">
    <text evidence="1">Magnesium transporter that may mediate the influx of magnesium.</text>
</comment>
<comment type="subcellular location">
    <subcellularLocation>
        <location evidence="1">Membrane</location>
        <topology evidence="1">Multi-pass membrane protein</topology>
    </subcellularLocation>
</comment>
<comment type="similarity">
    <text evidence="4">Belongs to the CorA metal ion transporter (MIT) (TC 1.A.35.5) family.</text>
</comment>
<evidence type="ECO:0000250" key="1"/>
<evidence type="ECO:0000255" key="2"/>
<evidence type="ECO:0000256" key="3">
    <source>
        <dbReference type="SAM" id="MobiDB-lite"/>
    </source>
</evidence>
<evidence type="ECO:0000305" key="4"/>
<dbReference type="EMBL" id="CM000131">
    <property type="protein sequence ID" value="EAZ01898.1"/>
    <property type="molecule type" value="Genomic_DNA"/>
</dbReference>
<dbReference type="SMR" id="A2YFN7"/>
<dbReference type="iPTMnet" id="A2YFN7"/>
<dbReference type="EnsemblPlants" id="BGIOSGA020774-TA">
    <property type="protein sequence ID" value="BGIOSGA020774-PA"/>
    <property type="gene ID" value="BGIOSGA020774"/>
</dbReference>
<dbReference type="EnsemblPlants" id="OsGoSa_06g0024110.01">
    <property type="protein sequence ID" value="OsGoSa_06g0024110.01"/>
    <property type="gene ID" value="OsGoSa_06g0024110"/>
</dbReference>
<dbReference type="EnsemblPlants" id="OsIR64_06g0024040.01">
    <property type="protein sequence ID" value="OsIR64_06g0024040.01"/>
    <property type="gene ID" value="OsIR64_06g0024040"/>
</dbReference>
<dbReference type="EnsemblPlants" id="OsKYG_06g0024430.01">
    <property type="protein sequence ID" value="OsKYG_06g0024430.01"/>
    <property type="gene ID" value="OsKYG_06g0024430"/>
</dbReference>
<dbReference type="EnsemblPlants" id="OsLaMu_06g0024350.01">
    <property type="protein sequence ID" value="OsLaMu_06g0024350.01"/>
    <property type="gene ID" value="OsLaMu_06g0024350"/>
</dbReference>
<dbReference type="EnsemblPlants" id="OsLima_06g0024460.01">
    <property type="protein sequence ID" value="OsLima_06g0024460.01"/>
    <property type="gene ID" value="OsLima_06g0024460"/>
</dbReference>
<dbReference type="EnsemblPlants" id="OsLiXu_06g0024710.01">
    <property type="protein sequence ID" value="OsLiXu_06g0024710.01"/>
    <property type="gene ID" value="OsLiXu_06g0024710"/>
</dbReference>
<dbReference type="EnsemblPlants" id="OsMH63_06G024430_01">
    <property type="protein sequence ID" value="OsMH63_06G024430_01"/>
    <property type="gene ID" value="OsMH63_06G024430"/>
</dbReference>
<dbReference type="EnsemblPlants" id="OsPr106_06g0024540.01">
    <property type="protein sequence ID" value="OsPr106_06g0024540.01"/>
    <property type="gene ID" value="OsPr106_06g0024540"/>
</dbReference>
<dbReference type="EnsemblPlants" id="OsZS97_06G024600_01">
    <property type="protein sequence ID" value="OsZS97_06G024600_01"/>
    <property type="gene ID" value="OsZS97_06G024600"/>
</dbReference>
<dbReference type="Gramene" id="BGIOSGA020774-TA">
    <property type="protein sequence ID" value="BGIOSGA020774-PA"/>
    <property type="gene ID" value="BGIOSGA020774"/>
</dbReference>
<dbReference type="Gramene" id="OsGoSa_06g0024110.01">
    <property type="protein sequence ID" value="OsGoSa_06g0024110.01"/>
    <property type="gene ID" value="OsGoSa_06g0024110"/>
</dbReference>
<dbReference type="Gramene" id="OsIR64_06g0024040.01">
    <property type="protein sequence ID" value="OsIR64_06g0024040.01"/>
    <property type="gene ID" value="OsIR64_06g0024040"/>
</dbReference>
<dbReference type="Gramene" id="OsKYG_06g0024430.01">
    <property type="protein sequence ID" value="OsKYG_06g0024430.01"/>
    <property type="gene ID" value="OsKYG_06g0024430"/>
</dbReference>
<dbReference type="Gramene" id="OsLaMu_06g0024350.01">
    <property type="protein sequence ID" value="OsLaMu_06g0024350.01"/>
    <property type="gene ID" value="OsLaMu_06g0024350"/>
</dbReference>
<dbReference type="Gramene" id="OsLima_06g0024460.01">
    <property type="protein sequence ID" value="OsLima_06g0024460.01"/>
    <property type="gene ID" value="OsLima_06g0024460"/>
</dbReference>
<dbReference type="Gramene" id="OsLiXu_06g0024710.01">
    <property type="protein sequence ID" value="OsLiXu_06g0024710.01"/>
    <property type="gene ID" value="OsLiXu_06g0024710"/>
</dbReference>
<dbReference type="Gramene" id="OsMH63_06G024430_01">
    <property type="protein sequence ID" value="OsMH63_06G024430_01"/>
    <property type="gene ID" value="OsMH63_06G024430"/>
</dbReference>
<dbReference type="Gramene" id="OsPr106_06g0024540.01">
    <property type="protein sequence ID" value="OsPr106_06g0024540.01"/>
    <property type="gene ID" value="OsPr106_06g0024540"/>
</dbReference>
<dbReference type="Gramene" id="OsZS97_06G024600_01">
    <property type="protein sequence ID" value="OsZS97_06G024600_01"/>
    <property type="gene ID" value="OsZS97_06G024600"/>
</dbReference>
<dbReference type="HOGENOM" id="CLU_034694_1_1_1"/>
<dbReference type="OMA" id="GHCSIER"/>
<dbReference type="OrthoDB" id="10251508at2759"/>
<dbReference type="Proteomes" id="UP000007015">
    <property type="component" value="Chromosome 6"/>
</dbReference>
<dbReference type="GO" id="GO:0016020">
    <property type="term" value="C:membrane"/>
    <property type="evidence" value="ECO:0007669"/>
    <property type="project" value="UniProtKB-SubCell"/>
</dbReference>
<dbReference type="GO" id="GO:0015095">
    <property type="term" value="F:magnesium ion transmembrane transporter activity"/>
    <property type="evidence" value="ECO:0007669"/>
    <property type="project" value="TreeGrafter"/>
</dbReference>
<dbReference type="CDD" id="cd12823">
    <property type="entry name" value="Mrs2_Mfm1p-like"/>
    <property type="match status" value="1"/>
</dbReference>
<dbReference type="FunFam" id="1.20.58.340:FF:000009">
    <property type="entry name" value="Magnesium transporter MRS2-1"/>
    <property type="match status" value="1"/>
</dbReference>
<dbReference type="FunFam" id="2.40.128.330:FF:000001">
    <property type="entry name" value="Magnesium transporter MRS2-1"/>
    <property type="match status" value="1"/>
</dbReference>
<dbReference type="Gene3D" id="2.40.128.330">
    <property type="match status" value="1"/>
</dbReference>
<dbReference type="Gene3D" id="1.20.58.340">
    <property type="entry name" value="Magnesium transport protein CorA, transmembrane region"/>
    <property type="match status" value="2"/>
</dbReference>
<dbReference type="InterPro" id="IPR045863">
    <property type="entry name" value="CorA_TM1_TM2"/>
</dbReference>
<dbReference type="InterPro" id="IPR039204">
    <property type="entry name" value="MRS2-like"/>
</dbReference>
<dbReference type="PANTHER" id="PTHR13890:SF26">
    <property type="entry name" value="MAGNESIUM TRANSPORTER MRS2-1"/>
    <property type="match status" value="1"/>
</dbReference>
<dbReference type="PANTHER" id="PTHR13890">
    <property type="entry name" value="RNA SPLICING PROTEIN MRS2, MITOCHONDRIAL"/>
    <property type="match status" value="1"/>
</dbReference>
<dbReference type="Pfam" id="PF22099">
    <property type="entry name" value="MRS2-like"/>
    <property type="match status" value="2"/>
</dbReference>
<dbReference type="SUPFAM" id="SSF144083">
    <property type="entry name" value="Magnesium transport protein CorA, transmembrane region"/>
    <property type="match status" value="1"/>
</dbReference>
<accession>A2YFN7</accession>
<reference key="1">
    <citation type="journal article" date="2005" name="PLoS Biol.">
        <title>The genomes of Oryza sativa: a history of duplications.</title>
        <authorList>
            <person name="Yu J."/>
            <person name="Wang J."/>
            <person name="Lin W."/>
            <person name="Li S."/>
            <person name="Li H."/>
            <person name="Zhou J."/>
            <person name="Ni P."/>
            <person name="Dong W."/>
            <person name="Hu S."/>
            <person name="Zeng C."/>
            <person name="Zhang J."/>
            <person name="Zhang Y."/>
            <person name="Li R."/>
            <person name="Xu Z."/>
            <person name="Li S."/>
            <person name="Li X."/>
            <person name="Zheng H."/>
            <person name="Cong L."/>
            <person name="Lin L."/>
            <person name="Yin J."/>
            <person name="Geng J."/>
            <person name="Li G."/>
            <person name="Shi J."/>
            <person name="Liu J."/>
            <person name="Lv H."/>
            <person name="Li J."/>
            <person name="Wang J."/>
            <person name="Deng Y."/>
            <person name="Ran L."/>
            <person name="Shi X."/>
            <person name="Wang X."/>
            <person name="Wu Q."/>
            <person name="Li C."/>
            <person name="Ren X."/>
            <person name="Wang J."/>
            <person name="Wang X."/>
            <person name="Li D."/>
            <person name="Liu D."/>
            <person name="Zhang X."/>
            <person name="Ji Z."/>
            <person name="Zhao W."/>
            <person name="Sun Y."/>
            <person name="Zhang Z."/>
            <person name="Bao J."/>
            <person name="Han Y."/>
            <person name="Dong L."/>
            <person name="Ji J."/>
            <person name="Chen P."/>
            <person name="Wu S."/>
            <person name="Liu J."/>
            <person name="Xiao Y."/>
            <person name="Bu D."/>
            <person name="Tan J."/>
            <person name="Yang L."/>
            <person name="Ye C."/>
            <person name="Zhang J."/>
            <person name="Xu J."/>
            <person name="Zhou Y."/>
            <person name="Yu Y."/>
            <person name="Zhang B."/>
            <person name="Zhuang S."/>
            <person name="Wei H."/>
            <person name="Liu B."/>
            <person name="Lei M."/>
            <person name="Yu H."/>
            <person name="Li Y."/>
            <person name="Xu H."/>
            <person name="Wei S."/>
            <person name="He X."/>
            <person name="Fang L."/>
            <person name="Zhang Z."/>
            <person name="Zhang Y."/>
            <person name="Huang X."/>
            <person name="Su Z."/>
            <person name="Tong W."/>
            <person name="Li J."/>
            <person name="Tong Z."/>
            <person name="Li S."/>
            <person name="Ye J."/>
            <person name="Wang L."/>
            <person name="Fang L."/>
            <person name="Lei T."/>
            <person name="Chen C.-S."/>
            <person name="Chen H.-C."/>
            <person name="Xu Z."/>
            <person name="Li H."/>
            <person name="Huang H."/>
            <person name="Zhang F."/>
            <person name="Xu H."/>
            <person name="Li N."/>
            <person name="Zhao C."/>
            <person name="Li S."/>
            <person name="Dong L."/>
            <person name="Huang Y."/>
            <person name="Li L."/>
            <person name="Xi Y."/>
            <person name="Qi Q."/>
            <person name="Li W."/>
            <person name="Zhang B."/>
            <person name="Hu W."/>
            <person name="Zhang Y."/>
            <person name="Tian X."/>
            <person name="Jiao Y."/>
            <person name="Liang X."/>
            <person name="Jin J."/>
            <person name="Gao L."/>
            <person name="Zheng W."/>
            <person name="Hao B."/>
            <person name="Liu S.-M."/>
            <person name="Wang W."/>
            <person name="Yuan L."/>
            <person name="Cao M."/>
            <person name="McDermott J."/>
            <person name="Samudrala R."/>
            <person name="Wang J."/>
            <person name="Wong G.K.-S."/>
            <person name="Yang H."/>
        </authorList>
    </citation>
    <scope>NUCLEOTIDE SEQUENCE [LARGE SCALE GENOMIC DNA]</scope>
    <source>
        <strain>cv. 93-11</strain>
    </source>
</reference>
<name>MRS2B_ORYSI</name>
<protein>
    <recommendedName>
        <fullName>Magnesium transporter MRS2-B</fullName>
    </recommendedName>
</protein>
<keyword id="KW-0175">Coiled coil</keyword>
<keyword id="KW-0406">Ion transport</keyword>
<keyword id="KW-0460">Magnesium</keyword>
<keyword id="KW-0472">Membrane</keyword>
<keyword id="KW-1185">Reference proteome</keyword>
<keyword id="KW-0812">Transmembrane</keyword>
<keyword id="KW-1133">Transmembrane helix</keyword>
<keyword id="KW-0813">Transport</keyword>
<gene>
    <name type="primary">MRS2-B</name>
    <name type="ORF">OsI_23924</name>
</gene>